<gene>
    <name type="ORF">ORF1</name>
</gene>
<feature type="chain" id="PRO_0000329070" description="DNA polymerase">
    <location>
        <begin position="1"/>
        <end position="1086"/>
    </location>
</feature>
<feature type="region of interest" description="Disordered" evidence="2">
    <location>
        <begin position="638"/>
        <end position="657"/>
    </location>
</feature>
<dbReference type="EC" id="2.7.7.7"/>
<dbReference type="EMBL" id="EF133465">
    <property type="protein sequence ID" value="ABO37187.1"/>
    <property type="molecule type" value="Genomic_DNA"/>
</dbReference>
<dbReference type="RefSeq" id="YP_001110854.1">
    <property type="nucleotide sequence ID" value="NC_009233.1"/>
</dbReference>
<dbReference type="SMR" id="A4KX57"/>
<dbReference type="KEGG" id="vg:5076078"/>
<dbReference type="Proteomes" id="UP000001324">
    <property type="component" value="Genome"/>
</dbReference>
<dbReference type="GO" id="GO:0003677">
    <property type="term" value="F:DNA binding"/>
    <property type="evidence" value="ECO:0007669"/>
    <property type="project" value="UniProtKB-KW"/>
</dbReference>
<dbReference type="GO" id="GO:0003887">
    <property type="term" value="F:DNA-directed DNA polymerase activity"/>
    <property type="evidence" value="ECO:0007669"/>
    <property type="project" value="UniProtKB-KW"/>
</dbReference>
<dbReference type="GO" id="GO:0000166">
    <property type="term" value="F:nucleotide binding"/>
    <property type="evidence" value="ECO:0007669"/>
    <property type="project" value="InterPro"/>
</dbReference>
<dbReference type="GO" id="GO:0006261">
    <property type="term" value="P:DNA-templated DNA replication"/>
    <property type="evidence" value="ECO:0007669"/>
    <property type="project" value="TreeGrafter"/>
</dbReference>
<dbReference type="GO" id="GO:0039693">
    <property type="term" value="P:viral DNA genome replication"/>
    <property type="evidence" value="ECO:0007669"/>
    <property type="project" value="UniProtKB-KW"/>
</dbReference>
<dbReference type="Gene3D" id="1.10.132.60">
    <property type="entry name" value="DNA polymerase family B, C-terminal domain"/>
    <property type="match status" value="1"/>
</dbReference>
<dbReference type="Gene3D" id="1.10.287.690">
    <property type="entry name" value="Helix hairpin bin"/>
    <property type="match status" value="1"/>
</dbReference>
<dbReference type="Gene3D" id="3.90.1600.10">
    <property type="entry name" value="Palm domain of DNA polymerase"/>
    <property type="match status" value="1"/>
</dbReference>
<dbReference type="Gene3D" id="3.30.420.10">
    <property type="entry name" value="Ribonuclease H-like superfamily/Ribonuclease H"/>
    <property type="match status" value="1"/>
</dbReference>
<dbReference type="InterPro" id="IPR006172">
    <property type="entry name" value="DNA-dir_DNA_pol_B"/>
</dbReference>
<dbReference type="InterPro" id="IPR017964">
    <property type="entry name" value="DNA-dir_DNA_pol_B_CS"/>
</dbReference>
<dbReference type="InterPro" id="IPR006133">
    <property type="entry name" value="DNA-dir_DNA_pol_B_exonuc"/>
</dbReference>
<dbReference type="InterPro" id="IPR006134">
    <property type="entry name" value="DNA-dir_DNA_pol_B_multi_dom"/>
</dbReference>
<dbReference type="InterPro" id="IPR043502">
    <property type="entry name" value="DNA/RNA_pol_sf"/>
</dbReference>
<dbReference type="InterPro" id="IPR042087">
    <property type="entry name" value="DNA_pol_B_thumb"/>
</dbReference>
<dbReference type="InterPro" id="IPR023211">
    <property type="entry name" value="DNA_pol_palm_dom_sf"/>
</dbReference>
<dbReference type="InterPro" id="IPR050240">
    <property type="entry name" value="DNA_pol_type-B"/>
</dbReference>
<dbReference type="InterPro" id="IPR012337">
    <property type="entry name" value="RNaseH-like_sf"/>
</dbReference>
<dbReference type="InterPro" id="IPR036397">
    <property type="entry name" value="RNaseH_sf"/>
</dbReference>
<dbReference type="PANTHER" id="PTHR10322">
    <property type="entry name" value="DNA POLYMERASE CATALYTIC SUBUNIT"/>
    <property type="match status" value="1"/>
</dbReference>
<dbReference type="PANTHER" id="PTHR10322:SF23">
    <property type="entry name" value="DNA POLYMERASE DELTA CATALYTIC SUBUNIT"/>
    <property type="match status" value="1"/>
</dbReference>
<dbReference type="Pfam" id="PF00136">
    <property type="entry name" value="DNA_pol_B"/>
    <property type="match status" value="2"/>
</dbReference>
<dbReference type="Pfam" id="PF03104">
    <property type="entry name" value="DNA_pol_B_exo1"/>
    <property type="match status" value="1"/>
</dbReference>
<dbReference type="PRINTS" id="PR00106">
    <property type="entry name" value="DNAPOLB"/>
</dbReference>
<dbReference type="SMART" id="SM00486">
    <property type="entry name" value="POLBc"/>
    <property type="match status" value="1"/>
</dbReference>
<dbReference type="SUPFAM" id="SSF56672">
    <property type="entry name" value="DNA/RNA polymerases"/>
    <property type="match status" value="1"/>
</dbReference>
<dbReference type="SUPFAM" id="SSF53098">
    <property type="entry name" value="Ribonuclease H-like"/>
    <property type="match status" value="1"/>
</dbReference>
<dbReference type="PROSITE" id="PS00116">
    <property type="entry name" value="DNA_POLYMERASE_B"/>
    <property type="match status" value="1"/>
</dbReference>
<organismHost>
    <name type="scientific">Noctuidae</name>
    <name type="common">owlet moths</name>
    <dbReference type="NCBI Taxonomy" id="7100"/>
</organismHost>
<reference key="1">
    <citation type="journal article" date="2007" name="J. Gen. Virol.">
        <title>Sequence and organization of the Heliothis virescens ascovirus genome.</title>
        <authorList>
            <person name="Asgari S."/>
            <person name="Davis J."/>
            <person name="Wood D."/>
            <person name="Wilson P."/>
            <person name="McGrath A."/>
        </authorList>
    </citation>
    <scope>NUCLEOTIDE SEQUENCE [LARGE SCALE GENOMIC DNA]</scope>
</reference>
<proteinExistence type="inferred from homology"/>
<comment type="function">
    <text evidence="1">Replicates the viral genome. Host DNA polymerases cannot substitute for the viral enzyme in this process (By similarity).</text>
</comment>
<comment type="catalytic activity">
    <reaction>
        <text>DNA(n) + a 2'-deoxyribonucleoside 5'-triphosphate = DNA(n+1) + diphosphate</text>
        <dbReference type="Rhea" id="RHEA:22508"/>
        <dbReference type="Rhea" id="RHEA-COMP:17339"/>
        <dbReference type="Rhea" id="RHEA-COMP:17340"/>
        <dbReference type="ChEBI" id="CHEBI:33019"/>
        <dbReference type="ChEBI" id="CHEBI:61560"/>
        <dbReference type="ChEBI" id="CHEBI:173112"/>
        <dbReference type="EC" id="2.7.7.7"/>
    </reaction>
</comment>
<comment type="similarity">
    <text evidence="3">Belongs to the DNA polymerase type-B family.</text>
</comment>
<accession>A4KX57</accession>
<name>DPOL_HVAVE</name>
<organism>
    <name type="scientific">Heliothis virescens ascovirus 3e</name>
    <name type="common">HvAV-3e</name>
    <dbReference type="NCBI Taxonomy" id="260797"/>
    <lineage>
        <taxon>Viruses</taxon>
        <taxon>Varidnaviria</taxon>
        <taxon>Bamfordvirae</taxon>
        <taxon>Nucleocytoviricota</taxon>
        <taxon>Megaviricetes</taxon>
        <taxon>Pimascovirales</taxon>
        <taxon>Ascoviridae</taxon>
        <taxon>Ascovirus</taxon>
        <taxon>Ascovirus TnAV2a</taxon>
    </lineage>
</organism>
<protein>
    <recommendedName>
        <fullName>DNA polymerase</fullName>
        <ecNumber>2.7.7.7</ecNumber>
    </recommendedName>
</protein>
<sequence>MDSITNGESFYVYDWRVVSTEKDTNYFDRSGNRKKWTEITLMLRAYCVDANGATVCLRMGQVKTKLYVEFPENYDLNPRRWSAIRTILKDAIYCKNDKCDSNIQRVSLQPLYGAKQVRTYVAIEFTSEVGKRAFINKISGKCDQRTKRTSAKFPDNVTGDQLRFHWMNVPTELQVLVNAKLPFAGWIETGRLYSPKDRKTRCDREYSVDIKQVRTSTSMACVTPPLKTFAWDIEAKINDMSSPGTHEDDEVYMISISVSDNTDHLILIAPDGCGEAMKRSMGAGDELTVHVCPNEVSLLLEFNKVCRSIGAVARMGWNVNRFDCVVLMARANRLNCSTTLLDLGLALDVPGCVSTTAGRTFGRFSPNDAIYFDTHGVLCLDVMEMFKSTYTKLPKYSLQYVSQKFLGTTKDPVTLKDLNELHSRLMLDDDHTNALRAVVSKYCVVDSRLTLQLCQKCAHMTSLTEMARITNTPITMVHYQKQQRRMFHLMFSECARKGVAMQDDFGRDRRLTMLDEDSTDGSSNVDNKRQLNYSGAYVKDPEPGLYNMVGSLDVNSMYPTLMIAYNLCYSTVIDDDAHSDYTDENFEIVEWEDHVGCEHDPNIKEREKLKSIFEDLAKVEKRKFIGVQPITKYFKPTSTTRKPVDDVEEHSECNGFTDDNYNDSPVSSIKLSSVDLQRAAIRLKVLKSRMSGGSKLCAKQRVRILKTRRGLLPDLVEYFLDARRKVRAEMKNVSDPLARDILDKSQLAYKVTANSVYGSTGAVNGKLPCQNVAKVTTALGRKTILQSIDIAQRDRSVSTIYSDTDSMYVQLGDEAGDDPWKFVRELAAHITSKLRKPMVIEAEDDIHAKVLFLGKKCYIGRKLFRDGSVSRELDWHGVITVRRDHSQYVKDVYRKAVHRVFADCTMEQFKHTIFEQALTLMQRRVSYERLTKTSEVRNVGDCCTITLCKKTMSWMLGDYKVPQHSHHDILYNTKRDALKTYYVSKLPAPARLSVSLVDRGRPAIEGGRIEFLNIRISNPDDLPIEEISYFKEHGGIVDRLYYIKQIINPLTKVSEAVWKRSDTVIGAVTPILNYDKVVRQLDTMFN</sequence>
<keyword id="KW-0235">DNA replication</keyword>
<keyword id="KW-0238">DNA-binding</keyword>
<keyword id="KW-0239">DNA-directed DNA polymerase</keyword>
<keyword id="KW-0548">Nucleotidyltransferase</keyword>
<keyword id="KW-1185">Reference proteome</keyword>
<keyword id="KW-0808">Transferase</keyword>
<keyword id="KW-1194">Viral DNA replication</keyword>
<evidence type="ECO:0000250" key="1"/>
<evidence type="ECO:0000256" key="2">
    <source>
        <dbReference type="SAM" id="MobiDB-lite"/>
    </source>
</evidence>
<evidence type="ECO:0000305" key="3"/>